<evidence type="ECO:0000255" key="1">
    <source>
        <dbReference type="HAMAP-Rule" id="MF_00366"/>
    </source>
</evidence>
<organism>
    <name type="scientific">Coxiella burnetii (strain CbuK_Q154)</name>
    <name type="common">Coxiella burnetii (strain Q154)</name>
    <dbReference type="NCBI Taxonomy" id="434924"/>
    <lineage>
        <taxon>Bacteria</taxon>
        <taxon>Pseudomonadati</taxon>
        <taxon>Pseudomonadota</taxon>
        <taxon>Gammaproteobacteria</taxon>
        <taxon>Legionellales</taxon>
        <taxon>Coxiellaceae</taxon>
        <taxon>Coxiella</taxon>
    </lineage>
</organism>
<feature type="chain" id="PRO_1000121206" description="DNA-directed RNA polymerase subunit omega">
    <location>
        <begin position="1"/>
        <end position="97"/>
    </location>
</feature>
<name>RPOZ_COXB1</name>
<protein>
    <recommendedName>
        <fullName evidence="1">DNA-directed RNA polymerase subunit omega</fullName>
        <shortName evidence="1">RNAP omega subunit</shortName>
        <ecNumber evidence="1">2.7.7.6</ecNumber>
    </recommendedName>
    <alternativeName>
        <fullName evidence="1">RNA polymerase omega subunit</fullName>
    </alternativeName>
    <alternativeName>
        <fullName evidence="1">Transcriptase subunit omega</fullName>
    </alternativeName>
</protein>
<dbReference type="EC" id="2.7.7.6" evidence="1"/>
<dbReference type="EMBL" id="CP001020">
    <property type="protein sequence ID" value="ACJ19779.1"/>
    <property type="molecule type" value="Genomic_DNA"/>
</dbReference>
<dbReference type="RefSeq" id="WP_005771414.1">
    <property type="nucleotide sequence ID" value="NC_011528.1"/>
</dbReference>
<dbReference type="SMR" id="B6J5T7"/>
<dbReference type="KEGG" id="cbc:CbuK_0499"/>
<dbReference type="HOGENOM" id="CLU_125406_5_1_6"/>
<dbReference type="GO" id="GO:0000428">
    <property type="term" value="C:DNA-directed RNA polymerase complex"/>
    <property type="evidence" value="ECO:0007669"/>
    <property type="project" value="UniProtKB-KW"/>
</dbReference>
<dbReference type="GO" id="GO:0003677">
    <property type="term" value="F:DNA binding"/>
    <property type="evidence" value="ECO:0007669"/>
    <property type="project" value="UniProtKB-UniRule"/>
</dbReference>
<dbReference type="GO" id="GO:0003899">
    <property type="term" value="F:DNA-directed RNA polymerase activity"/>
    <property type="evidence" value="ECO:0007669"/>
    <property type="project" value="UniProtKB-UniRule"/>
</dbReference>
<dbReference type="GO" id="GO:0006351">
    <property type="term" value="P:DNA-templated transcription"/>
    <property type="evidence" value="ECO:0007669"/>
    <property type="project" value="UniProtKB-UniRule"/>
</dbReference>
<dbReference type="Gene3D" id="3.90.940.10">
    <property type="match status" value="1"/>
</dbReference>
<dbReference type="HAMAP" id="MF_00366">
    <property type="entry name" value="RNApol_bact_RpoZ"/>
    <property type="match status" value="1"/>
</dbReference>
<dbReference type="InterPro" id="IPR003716">
    <property type="entry name" value="DNA-dir_RNA_pol_omega"/>
</dbReference>
<dbReference type="InterPro" id="IPR006110">
    <property type="entry name" value="Pol_omega/Rpo6/RPB6"/>
</dbReference>
<dbReference type="InterPro" id="IPR036161">
    <property type="entry name" value="RPB6/omega-like_sf"/>
</dbReference>
<dbReference type="NCBIfam" id="TIGR00690">
    <property type="entry name" value="rpoZ"/>
    <property type="match status" value="1"/>
</dbReference>
<dbReference type="PANTHER" id="PTHR34476">
    <property type="entry name" value="DNA-DIRECTED RNA POLYMERASE SUBUNIT OMEGA"/>
    <property type="match status" value="1"/>
</dbReference>
<dbReference type="PANTHER" id="PTHR34476:SF1">
    <property type="entry name" value="DNA-DIRECTED RNA POLYMERASE SUBUNIT OMEGA"/>
    <property type="match status" value="1"/>
</dbReference>
<dbReference type="Pfam" id="PF01192">
    <property type="entry name" value="RNA_pol_Rpb6"/>
    <property type="match status" value="1"/>
</dbReference>
<dbReference type="SMART" id="SM01409">
    <property type="entry name" value="RNA_pol_Rpb6"/>
    <property type="match status" value="1"/>
</dbReference>
<dbReference type="SUPFAM" id="SSF63562">
    <property type="entry name" value="RPB6/omega subunit-like"/>
    <property type="match status" value="1"/>
</dbReference>
<proteinExistence type="inferred from homology"/>
<keyword id="KW-0240">DNA-directed RNA polymerase</keyword>
<keyword id="KW-0548">Nucleotidyltransferase</keyword>
<keyword id="KW-0804">Transcription</keyword>
<keyword id="KW-0808">Transferase</keyword>
<comment type="function">
    <text evidence="1">Promotes RNA polymerase assembly. Latches the N- and C-terminal regions of the beta' subunit thereby facilitating its interaction with the beta and alpha subunits.</text>
</comment>
<comment type="catalytic activity">
    <reaction evidence="1">
        <text>RNA(n) + a ribonucleoside 5'-triphosphate = RNA(n+1) + diphosphate</text>
        <dbReference type="Rhea" id="RHEA:21248"/>
        <dbReference type="Rhea" id="RHEA-COMP:14527"/>
        <dbReference type="Rhea" id="RHEA-COMP:17342"/>
        <dbReference type="ChEBI" id="CHEBI:33019"/>
        <dbReference type="ChEBI" id="CHEBI:61557"/>
        <dbReference type="ChEBI" id="CHEBI:140395"/>
        <dbReference type="EC" id="2.7.7.6"/>
    </reaction>
</comment>
<comment type="subunit">
    <text evidence="1">The RNAP catalytic core consists of 2 alpha, 1 beta, 1 beta' and 1 omega subunit. When a sigma factor is associated with the core the holoenzyme is formed, which can initiate transcription.</text>
</comment>
<comment type="similarity">
    <text evidence="1">Belongs to the RNA polymerase subunit omega family.</text>
</comment>
<accession>B6J5T7</accession>
<sequence length="97" mass="10759">MARVTVEDCLEHVENRFDLVLKAAKRAHILELGGAEPMVPRDNDKPAVLALREIAAGYDVTREGQEQETEEVDVDRNVLAETAKMNKAVASQKESEV</sequence>
<reference key="1">
    <citation type="journal article" date="2009" name="Infect. Immun.">
        <title>Comparative genomics reveal extensive transposon-mediated genomic plasticity and diversity among potential effector proteins within the genus Coxiella.</title>
        <authorList>
            <person name="Beare P.A."/>
            <person name="Unsworth N."/>
            <person name="Andoh M."/>
            <person name="Voth D.E."/>
            <person name="Omsland A."/>
            <person name="Gilk S.D."/>
            <person name="Williams K.P."/>
            <person name="Sobral B.W."/>
            <person name="Kupko J.J. III"/>
            <person name="Porcella S.F."/>
            <person name="Samuel J.E."/>
            <person name="Heinzen R.A."/>
        </authorList>
    </citation>
    <scope>NUCLEOTIDE SEQUENCE [LARGE SCALE GENOMIC DNA]</scope>
    <source>
        <strain>CbuK_Q154</strain>
    </source>
</reference>
<gene>
    <name evidence="1" type="primary">rpoZ</name>
    <name type="ordered locus">CbuK_0499</name>
</gene>